<gene>
    <name evidence="1" type="primary">kynU</name>
</gene>
<sequence>MTTRNDCLALDAQDSLAPLRQQFALPEGVIYLDGNSLGARPVAALARAQAVIAEEWGNGLIRSWNSAGWRDLSERLGNRLATLIGARDGEVVVTDTTSINLFKVLSAALRVQATRSPERRVIVTETSNFPTDLYIAEGLADMLQQGYTLRLVDSPEELPQAIDQDTAVVMLTHVNYKTGYMHDMQALTALSHECGALAIWDLAHSAGAVPVDLHQAGADYAIGCTYKYLNGGPGSQAFVWVSPQLCDLVPQPLSGWFGHSRQFAMEPRYEPSNGIARYLCGTQPITSLAMVECGLDVFAQTDMASLRRKSLALTDLFIELVEQRCAAHELTLVTPREHAKRGSHVSFEHPEGYAVIQALIDRGVIGDYREPRIMRFGFTPLYTTFTEVWDAVQILGEILDRKTWAQAQFQVRHSVT</sequence>
<dbReference type="EC" id="3.7.1.3" evidence="1"/>
<dbReference type="PDB" id="1QZ9">
    <property type="method" value="X-ray"/>
    <property type="resolution" value="1.85 A"/>
    <property type="chains" value="A=1-416"/>
</dbReference>
<dbReference type="PDBsum" id="1QZ9"/>
<dbReference type="SMR" id="P83788"/>
<dbReference type="DrugBank" id="DB02343">
    <property type="generic name" value="3,6,9,12,15-Pentaoxaheptadecane"/>
</dbReference>
<dbReference type="BioCyc" id="MetaCyc:MONOMER-7065"/>
<dbReference type="BRENDA" id="3.7.1.3">
    <property type="organism ID" value="5121"/>
</dbReference>
<dbReference type="SABIO-RK" id="P83788"/>
<dbReference type="UniPathway" id="UPA00253">
    <property type="reaction ID" value="UER00329"/>
</dbReference>
<dbReference type="UniPathway" id="UPA00334">
    <property type="reaction ID" value="UER00455"/>
</dbReference>
<dbReference type="EvolutionaryTrace" id="P83788"/>
<dbReference type="GO" id="GO:0005737">
    <property type="term" value="C:cytoplasm"/>
    <property type="evidence" value="ECO:0007669"/>
    <property type="project" value="InterPro"/>
</dbReference>
<dbReference type="GO" id="GO:0030429">
    <property type="term" value="F:kynureninase activity"/>
    <property type="evidence" value="ECO:0007669"/>
    <property type="project" value="UniProtKB-UniRule"/>
</dbReference>
<dbReference type="GO" id="GO:0030170">
    <property type="term" value="F:pyridoxal phosphate binding"/>
    <property type="evidence" value="ECO:0007669"/>
    <property type="project" value="UniProtKB-UniRule"/>
</dbReference>
<dbReference type="GO" id="GO:0043420">
    <property type="term" value="P:anthranilate metabolic process"/>
    <property type="evidence" value="ECO:0007669"/>
    <property type="project" value="TreeGrafter"/>
</dbReference>
<dbReference type="GO" id="GO:0097053">
    <property type="term" value="P:L-kynurenine catabolic process"/>
    <property type="evidence" value="ECO:0007669"/>
    <property type="project" value="UniProtKB-UniRule"/>
</dbReference>
<dbReference type="GO" id="GO:0019441">
    <property type="term" value="P:L-tryptophan catabolic process to kynurenine"/>
    <property type="evidence" value="ECO:0007669"/>
    <property type="project" value="TreeGrafter"/>
</dbReference>
<dbReference type="GO" id="GO:0009435">
    <property type="term" value="P:NAD biosynthetic process"/>
    <property type="evidence" value="ECO:0007669"/>
    <property type="project" value="UniProtKB-UniPathway"/>
</dbReference>
<dbReference type="GO" id="GO:0019805">
    <property type="term" value="P:quinolinate biosynthetic process"/>
    <property type="evidence" value="ECO:0007669"/>
    <property type="project" value="UniProtKB-UniRule"/>
</dbReference>
<dbReference type="FunFam" id="3.40.640.10:FF:000107">
    <property type="entry name" value="Kynureninase"/>
    <property type="match status" value="1"/>
</dbReference>
<dbReference type="Gene3D" id="3.90.1150.10">
    <property type="entry name" value="Aspartate Aminotransferase, domain 1"/>
    <property type="match status" value="1"/>
</dbReference>
<dbReference type="Gene3D" id="3.40.640.10">
    <property type="entry name" value="Type I PLP-dependent aspartate aminotransferase-like (Major domain)"/>
    <property type="match status" value="1"/>
</dbReference>
<dbReference type="HAMAP" id="MF_01970">
    <property type="entry name" value="Kynureninase"/>
    <property type="match status" value="1"/>
</dbReference>
<dbReference type="InterPro" id="IPR000653">
    <property type="entry name" value="DegT/StrS_aminotransferase"/>
</dbReference>
<dbReference type="InterPro" id="IPR010111">
    <property type="entry name" value="Kynureninase"/>
</dbReference>
<dbReference type="InterPro" id="IPR015424">
    <property type="entry name" value="PyrdxlP-dep_Trfase"/>
</dbReference>
<dbReference type="InterPro" id="IPR015421">
    <property type="entry name" value="PyrdxlP-dep_Trfase_major"/>
</dbReference>
<dbReference type="InterPro" id="IPR015422">
    <property type="entry name" value="PyrdxlP-dep_Trfase_small"/>
</dbReference>
<dbReference type="NCBIfam" id="TIGR01814">
    <property type="entry name" value="kynureninase"/>
    <property type="match status" value="1"/>
</dbReference>
<dbReference type="PANTHER" id="PTHR14084">
    <property type="entry name" value="KYNURENINASE"/>
    <property type="match status" value="1"/>
</dbReference>
<dbReference type="PANTHER" id="PTHR14084:SF0">
    <property type="entry name" value="KYNURENINASE"/>
    <property type="match status" value="1"/>
</dbReference>
<dbReference type="Pfam" id="PF01041">
    <property type="entry name" value="DegT_DnrJ_EryC1"/>
    <property type="match status" value="1"/>
</dbReference>
<dbReference type="Pfam" id="PF22580">
    <property type="entry name" value="KYNU_C"/>
    <property type="match status" value="1"/>
</dbReference>
<dbReference type="PIRSF" id="PIRSF038800">
    <property type="entry name" value="KYNU"/>
    <property type="match status" value="1"/>
</dbReference>
<dbReference type="SUPFAM" id="SSF53383">
    <property type="entry name" value="PLP-dependent transferases"/>
    <property type="match status" value="1"/>
</dbReference>
<accession>P83788</accession>
<keyword id="KW-0002">3D-structure</keyword>
<keyword id="KW-0378">Hydrolase</keyword>
<keyword id="KW-0662">Pyridine nucleotide biosynthesis</keyword>
<keyword id="KW-0663">Pyridoxal phosphate</keyword>
<feature type="chain" id="PRO_0000357010" description="Kynureninase">
    <location>
        <begin position="1"/>
        <end position="416"/>
    </location>
</feature>
<feature type="binding site" evidence="1 2">
    <location>
        <position position="97"/>
    </location>
    <ligand>
        <name>pyridoxal 5'-phosphate</name>
        <dbReference type="ChEBI" id="CHEBI:597326"/>
    </ligand>
</feature>
<feature type="binding site" evidence="1 2">
    <location>
        <position position="98"/>
    </location>
    <ligand>
        <name>pyridoxal 5'-phosphate</name>
        <dbReference type="ChEBI" id="CHEBI:597326"/>
    </ligand>
</feature>
<feature type="binding site">
    <location>
        <begin position="129"/>
        <end position="132"/>
    </location>
    <ligand>
        <name>pyridoxal 5'-phosphate</name>
        <dbReference type="ChEBI" id="CHEBI:597326"/>
    </ligand>
</feature>
<feature type="binding site" evidence="1 2">
    <location>
        <position position="172"/>
    </location>
    <ligand>
        <name>pyridoxal 5'-phosphate</name>
        <dbReference type="ChEBI" id="CHEBI:597326"/>
    </ligand>
</feature>
<feature type="binding site" evidence="1 2">
    <location>
        <position position="201"/>
    </location>
    <ligand>
        <name>pyridoxal 5'-phosphate</name>
        <dbReference type="ChEBI" id="CHEBI:597326"/>
    </ligand>
</feature>
<feature type="binding site" evidence="1 2">
    <location>
        <position position="204"/>
    </location>
    <ligand>
        <name>pyridoxal 5'-phosphate</name>
        <dbReference type="ChEBI" id="CHEBI:597326"/>
    </ligand>
</feature>
<feature type="binding site" evidence="3">
    <location>
        <position position="226"/>
    </location>
    <ligand>
        <name>pyridoxal 5'-phosphate</name>
        <dbReference type="ChEBI" id="CHEBI:597326"/>
    </ligand>
</feature>
<feature type="binding site" evidence="3">
    <location>
        <position position="256"/>
    </location>
    <ligand>
        <name>pyridoxal 5'-phosphate</name>
        <dbReference type="ChEBI" id="CHEBI:597326"/>
    </ligand>
</feature>
<feature type="binding site" evidence="3">
    <location>
        <position position="282"/>
    </location>
    <ligand>
        <name>pyridoxal 5'-phosphate</name>
        <dbReference type="ChEBI" id="CHEBI:597326"/>
    </ligand>
</feature>
<feature type="modified residue" description="N6-(pyridoxal phosphate)lysine">
    <location>
        <position position="227"/>
    </location>
</feature>
<feature type="mutagenesis site" description="Reduces binding to pyridoxal phosphate and strongly reduces catalytic activity." evidence="2">
    <original>D</original>
    <variation>A</variation>
    <location>
        <position position="132"/>
    </location>
</feature>
<feature type="mutagenesis site" description="Enhances binding to pyridoxal phosphate." evidence="2">
    <original>D</original>
    <variation>E</variation>
    <location>
        <position position="132"/>
    </location>
</feature>
<feature type="mutagenesis site" description="Enhances binding to pyridoxal phosphate." evidence="2">
    <original>D</original>
    <variation>E</variation>
    <location>
        <position position="201"/>
    </location>
</feature>
<feature type="helix" evidence="4">
    <location>
        <begin position="4"/>
        <end position="12"/>
    </location>
</feature>
<feature type="helix" evidence="4">
    <location>
        <begin position="17"/>
        <end position="22"/>
    </location>
</feature>
<feature type="turn" evidence="4">
    <location>
        <begin position="34"/>
        <end position="36"/>
    </location>
</feature>
<feature type="helix" evidence="4">
    <location>
        <begin position="44"/>
        <end position="53"/>
    </location>
</feature>
<feature type="helix" evidence="4">
    <location>
        <begin position="54"/>
        <end position="59"/>
    </location>
</feature>
<feature type="helix" evidence="4">
    <location>
        <begin position="60"/>
        <end position="62"/>
    </location>
</feature>
<feature type="helix" evidence="4">
    <location>
        <begin position="63"/>
        <end position="66"/>
    </location>
</feature>
<feature type="helix" evidence="4">
    <location>
        <begin position="69"/>
        <end position="71"/>
    </location>
</feature>
<feature type="helix" evidence="4">
    <location>
        <begin position="72"/>
        <end position="81"/>
    </location>
</feature>
<feature type="turn" evidence="4">
    <location>
        <begin position="82"/>
        <end position="85"/>
    </location>
</feature>
<feature type="strand" evidence="4">
    <location>
        <begin position="90"/>
        <end position="93"/>
    </location>
</feature>
<feature type="helix" evidence="4">
    <location>
        <begin position="97"/>
        <end position="115"/>
    </location>
</feature>
<feature type="strand" evidence="4">
    <location>
        <begin position="121"/>
        <end position="125"/>
    </location>
</feature>
<feature type="helix" evidence="4">
    <location>
        <begin position="130"/>
        <end position="143"/>
    </location>
</feature>
<feature type="strand" evidence="4">
    <location>
        <begin position="148"/>
        <end position="154"/>
    </location>
</feature>
<feature type="helix" evidence="4">
    <location>
        <begin position="155"/>
        <end position="157"/>
    </location>
</feature>
<feature type="helix" evidence="4">
    <location>
        <begin position="158"/>
        <end position="161"/>
    </location>
</feature>
<feature type="strand" evidence="4">
    <location>
        <begin position="166"/>
        <end position="174"/>
    </location>
</feature>
<feature type="turn" evidence="4">
    <location>
        <begin position="176"/>
        <end position="178"/>
    </location>
</feature>
<feature type="helix" evidence="4">
    <location>
        <begin position="184"/>
        <end position="194"/>
    </location>
</feature>
<feature type="strand" evidence="4">
    <location>
        <begin position="197"/>
        <end position="201"/>
    </location>
</feature>
<feature type="turn" evidence="4">
    <location>
        <begin position="203"/>
        <end position="208"/>
    </location>
</feature>
<feature type="helix" evidence="4">
    <location>
        <begin position="213"/>
        <end position="216"/>
    </location>
</feature>
<feature type="strand" evidence="4">
    <location>
        <begin position="219"/>
        <end position="223"/>
    </location>
</feature>
<feature type="strand" evidence="4">
    <location>
        <begin position="225"/>
        <end position="227"/>
    </location>
</feature>
<feature type="strand" evidence="4">
    <location>
        <begin position="238"/>
        <end position="241"/>
    </location>
</feature>
<feature type="turn" evidence="4">
    <location>
        <begin position="243"/>
        <end position="248"/>
    </location>
</feature>
<feature type="helix" evidence="4">
    <location>
        <begin position="256"/>
        <end position="258"/>
    </location>
</feature>
<feature type="helix" evidence="4">
    <location>
        <begin position="275"/>
        <end position="278"/>
    </location>
</feature>
<feature type="helix" evidence="4">
    <location>
        <begin position="285"/>
        <end position="298"/>
    </location>
</feature>
<feature type="helix" evidence="4">
    <location>
        <begin position="303"/>
        <end position="325"/>
    </location>
</feature>
<feature type="helix" evidence="4">
    <location>
        <begin position="338"/>
        <end position="340"/>
    </location>
</feature>
<feature type="strand" evidence="4">
    <location>
        <begin position="343"/>
        <end position="348"/>
    </location>
</feature>
<feature type="helix" evidence="4">
    <location>
        <begin position="352"/>
        <end position="360"/>
    </location>
</feature>
<feature type="turn" evidence="4">
    <location>
        <begin position="361"/>
        <end position="363"/>
    </location>
</feature>
<feature type="strand" evidence="4">
    <location>
        <begin position="367"/>
        <end position="369"/>
    </location>
</feature>
<feature type="turn" evidence="4">
    <location>
        <begin position="370"/>
        <end position="372"/>
    </location>
</feature>
<feature type="strand" evidence="4">
    <location>
        <begin position="373"/>
        <end position="377"/>
    </location>
</feature>
<feature type="turn" evidence="4">
    <location>
        <begin position="380"/>
        <end position="382"/>
    </location>
</feature>
<feature type="helix" evidence="4">
    <location>
        <begin position="385"/>
        <end position="401"/>
    </location>
</feature>
<feature type="turn" evidence="4">
    <location>
        <begin position="402"/>
        <end position="404"/>
    </location>
</feature>
<name>KYNU_PSEFL</name>
<evidence type="ECO:0000255" key="1">
    <source>
        <dbReference type="HAMAP-Rule" id="MF_01970"/>
    </source>
</evidence>
<evidence type="ECO:0000269" key="2">
    <source>
    </source>
</evidence>
<evidence type="ECO:0000305" key="3">
    <source>
    </source>
</evidence>
<evidence type="ECO:0007829" key="4">
    <source>
        <dbReference type="PDB" id="1QZ9"/>
    </source>
</evidence>
<reference key="1">
    <citation type="journal article" date="2004" name="Biochemistry">
        <title>Three-dimensional structure of kynureninase from Pseudomonas fluorescens.</title>
        <authorList>
            <person name="Momany C."/>
            <person name="Levdikov V."/>
            <person name="Blagova L."/>
            <person name="Lima S."/>
            <person name="Phillips R.S."/>
        </authorList>
    </citation>
    <scope>X-RAY CRYSTALLOGRAPHY (1.85 ANGSTROMS) IN COMPLEX WITH PYRIDOXAL PHOSPHATE</scope>
    <scope>CATALYTIC ACTIVITY</scope>
    <scope>HOMODIMERIZATION</scope>
    <scope>MUTAGENESIS OF ASP-132 AND ASP-201</scope>
</reference>
<comment type="function">
    <text>Catalyzes the cleavage of L-kynurenine (L-Kyn) and L-3-hydroxykynurenine (L-3OHKyn) into anthranilic acid (AA) and 3-hydroxyanthranilic acid (3-OHAA), respectively.</text>
</comment>
<comment type="catalytic activity">
    <reaction evidence="1 2">
        <text>L-kynurenine + H2O = anthranilate + L-alanine + H(+)</text>
        <dbReference type="Rhea" id="RHEA:16813"/>
        <dbReference type="ChEBI" id="CHEBI:15377"/>
        <dbReference type="ChEBI" id="CHEBI:15378"/>
        <dbReference type="ChEBI" id="CHEBI:16567"/>
        <dbReference type="ChEBI" id="CHEBI:57959"/>
        <dbReference type="ChEBI" id="CHEBI:57972"/>
        <dbReference type="EC" id="3.7.1.3"/>
    </reaction>
</comment>
<comment type="catalytic activity">
    <reaction evidence="1 2">
        <text>3-hydroxy-L-kynurenine + H2O = 3-hydroxyanthranilate + L-alanine + H(+)</text>
        <dbReference type="Rhea" id="RHEA:25143"/>
        <dbReference type="ChEBI" id="CHEBI:15377"/>
        <dbReference type="ChEBI" id="CHEBI:15378"/>
        <dbReference type="ChEBI" id="CHEBI:36559"/>
        <dbReference type="ChEBI" id="CHEBI:57972"/>
        <dbReference type="ChEBI" id="CHEBI:58125"/>
        <dbReference type="EC" id="3.7.1.3"/>
    </reaction>
</comment>
<comment type="cofactor">
    <cofactor>
        <name>pyridoxal 5'-phosphate</name>
        <dbReference type="ChEBI" id="CHEBI:597326"/>
    </cofactor>
</comment>
<comment type="pathway">
    <text evidence="1">Amino-acid degradation; L-kynurenine degradation; L-alanine and anthranilate from L-kynurenine: step 1/1.</text>
</comment>
<comment type="pathway">
    <text evidence="1">Cofactor biosynthesis; NAD(+) biosynthesis; quinolinate from L-kynurenine: step 2/3.</text>
</comment>
<comment type="subunit">
    <text evidence="1 2">Homodimer.</text>
</comment>
<comment type="similarity">
    <text evidence="1">Belongs to the kynureninase family.</text>
</comment>
<organism>
    <name type="scientific">Pseudomonas fluorescens</name>
    <dbReference type="NCBI Taxonomy" id="294"/>
    <lineage>
        <taxon>Bacteria</taxon>
        <taxon>Pseudomonadati</taxon>
        <taxon>Pseudomonadota</taxon>
        <taxon>Gammaproteobacteria</taxon>
        <taxon>Pseudomonadales</taxon>
        <taxon>Pseudomonadaceae</taxon>
        <taxon>Pseudomonas</taxon>
    </lineage>
</organism>
<protein>
    <recommendedName>
        <fullName evidence="1">Kynureninase</fullName>
        <ecNumber evidence="1">3.7.1.3</ecNumber>
    </recommendedName>
    <alternativeName>
        <fullName evidence="1">L-kynurenine hydrolase</fullName>
    </alternativeName>
</protein>
<proteinExistence type="evidence at protein level"/>